<reference key="1">
    <citation type="journal article" date="2009" name="Genome Res.">
        <title>Newly introduced genomic prophage islands are critical determinants of in vivo competitiveness in the Liverpool epidemic strain of Pseudomonas aeruginosa.</title>
        <authorList>
            <person name="Winstanley C."/>
            <person name="Langille M.G.I."/>
            <person name="Fothergill J.L."/>
            <person name="Kukavica-Ibrulj I."/>
            <person name="Paradis-Bleau C."/>
            <person name="Sanschagrin F."/>
            <person name="Thomson N.R."/>
            <person name="Winsor G.L."/>
            <person name="Quail M.A."/>
            <person name="Lennard N."/>
            <person name="Bignell A."/>
            <person name="Clarke L."/>
            <person name="Seeger K."/>
            <person name="Saunders D."/>
            <person name="Harris D."/>
            <person name="Parkhill J."/>
            <person name="Hancock R.E.W."/>
            <person name="Brinkman F.S.L."/>
            <person name="Levesque R.C."/>
        </authorList>
    </citation>
    <scope>NUCLEOTIDE SEQUENCE [LARGE SCALE GENOMIC DNA]</scope>
    <source>
        <strain>LESB58</strain>
    </source>
</reference>
<feature type="chain" id="PRO_1000142434" description="Large ribosomal subunit protein uL5">
    <location>
        <begin position="1"/>
        <end position="179"/>
    </location>
</feature>
<accession>B7V656</accession>
<organism>
    <name type="scientific">Pseudomonas aeruginosa (strain LESB58)</name>
    <dbReference type="NCBI Taxonomy" id="557722"/>
    <lineage>
        <taxon>Bacteria</taxon>
        <taxon>Pseudomonadati</taxon>
        <taxon>Pseudomonadota</taxon>
        <taxon>Gammaproteobacteria</taxon>
        <taxon>Pseudomonadales</taxon>
        <taxon>Pseudomonadaceae</taxon>
        <taxon>Pseudomonas</taxon>
    </lineage>
</organism>
<evidence type="ECO:0000255" key="1">
    <source>
        <dbReference type="HAMAP-Rule" id="MF_01333"/>
    </source>
</evidence>
<evidence type="ECO:0000305" key="2"/>
<sequence length="179" mass="20392">MARLKEIYRKEIAPKLKEELQLANVMEVPRVTKITLNMGLGEAVGDKKIIENAVADLEKITGQKPVVTYARKSIAGFKIREGWPIGVKVTLRSDRMYEFLDRLLSISLPRVRDFRGLNAKSFDGRGNYSMGVKEQIIFPEIDYDKIDALRGLDITLTTTARTDDEGRALLRAFKFPFRN</sequence>
<gene>
    <name evidence="1" type="primary">rplE</name>
    <name type="ordered locus">PLES_06771</name>
</gene>
<name>RL5_PSEA8</name>
<dbReference type="EMBL" id="FM209186">
    <property type="protein sequence ID" value="CAW25404.1"/>
    <property type="molecule type" value="Genomic_DNA"/>
</dbReference>
<dbReference type="RefSeq" id="WP_003093703.1">
    <property type="nucleotide sequence ID" value="NC_011770.1"/>
</dbReference>
<dbReference type="SMR" id="B7V656"/>
<dbReference type="KEGG" id="pag:PLES_06771"/>
<dbReference type="HOGENOM" id="CLU_061015_2_1_6"/>
<dbReference type="GO" id="GO:1990904">
    <property type="term" value="C:ribonucleoprotein complex"/>
    <property type="evidence" value="ECO:0007669"/>
    <property type="project" value="UniProtKB-KW"/>
</dbReference>
<dbReference type="GO" id="GO:0005840">
    <property type="term" value="C:ribosome"/>
    <property type="evidence" value="ECO:0007669"/>
    <property type="project" value="UniProtKB-KW"/>
</dbReference>
<dbReference type="GO" id="GO:0019843">
    <property type="term" value="F:rRNA binding"/>
    <property type="evidence" value="ECO:0007669"/>
    <property type="project" value="UniProtKB-UniRule"/>
</dbReference>
<dbReference type="GO" id="GO:0003735">
    <property type="term" value="F:structural constituent of ribosome"/>
    <property type="evidence" value="ECO:0007669"/>
    <property type="project" value="InterPro"/>
</dbReference>
<dbReference type="GO" id="GO:0000049">
    <property type="term" value="F:tRNA binding"/>
    <property type="evidence" value="ECO:0007669"/>
    <property type="project" value="UniProtKB-UniRule"/>
</dbReference>
<dbReference type="GO" id="GO:0006412">
    <property type="term" value="P:translation"/>
    <property type="evidence" value="ECO:0007669"/>
    <property type="project" value="UniProtKB-UniRule"/>
</dbReference>
<dbReference type="FunFam" id="3.30.1440.10:FF:000001">
    <property type="entry name" value="50S ribosomal protein L5"/>
    <property type="match status" value="1"/>
</dbReference>
<dbReference type="Gene3D" id="3.30.1440.10">
    <property type="match status" value="1"/>
</dbReference>
<dbReference type="HAMAP" id="MF_01333_B">
    <property type="entry name" value="Ribosomal_uL5_B"/>
    <property type="match status" value="1"/>
</dbReference>
<dbReference type="InterPro" id="IPR002132">
    <property type="entry name" value="Ribosomal_uL5"/>
</dbReference>
<dbReference type="InterPro" id="IPR020930">
    <property type="entry name" value="Ribosomal_uL5_bac-type"/>
</dbReference>
<dbReference type="InterPro" id="IPR031309">
    <property type="entry name" value="Ribosomal_uL5_C"/>
</dbReference>
<dbReference type="InterPro" id="IPR020929">
    <property type="entry name" value="Ribosomal_uL5_CS"/>
</dbReference>
<dbReference type="InterPro" id="IPR022803">
    <property type="entry name" value="Ribosomal_uL5_dom_sf"/>
</dbReference>
<dbReference type="InterPro" id="IPR031310">
    <property type="entry name" value="Ribosomal_uL5_N"/>
</dbReference>
<dbReference type="NCBIfam" id="NF000585">
    <property type="entry name" value="PRK00010.1"/>
    <property type="match status" value="1"/>
</dbReference>
<dbReference type="PANTHER" id="PTHR11994">
    <property type="entry name" value="60S RIBOSOMAL PROTEIN L11-RELATED"/>
    <property type="match status" value="1"/>
</dbReference>
<dbReference type="Pfam" id="PF00281">
    <property type="entry name" value="Ribosomal_L5"/>
    <property type="match status" value="1"/>
</dbReference>
<dbReference type="Pfam" id="PF00673">
    <property type="entry name" value="Ribosomal_L5_C"/>
    <property type="match status" value="1"/>
</dbReference>
<dbReference type="PIRSF" id="PIRSF002161">
    <property type="entry name" value="Ribosomal_L5"/>
    <property type="match status" value="1"/>
</dbReference>
<dbReference type="SUPFAM" id="SSF55282">
    <property type="entry name" value="RL5-like"/>
    <property type="match status" value="1"/>
</dbReference>
<dbReference type="PROSITE" id="PS00358">
    <property type="entry name" value="RIBOSOMAL_L5"/>
    <property type="match status" value="1"/>
</dbReference>
<protein>
    <recommendedName>
        <fullName evidence="1">Large ribosomal subunit protein uL5</fullName>
    </recommendedName>
    <alternativeName>
        <fullName evidence="2">50S ribosomal protein L5</fullName>
    </alternativeName>
</protein>
<proteinExistence type="inferred from homology"/>
<keyword id="KW-0687">Ribonucleoprotein</keyword>
<keyword id="KW-0689">Ribosomal protein</keyword>
<keyword id="KW-0694">RNA-binding</keyword>
<keyword id="KW-0699">rRNA-binding</keyword>
<keyword id="KW-0820">tRNA-binding</keyword>
<comment type="function">
    <text evidence="1">This is one of the proteins that bind and probably mediate the attachment of the 5S RNA into the large ribosomal subunit, where it forms part of the central protuberance. In the 70S ribosome it contacts protein S13 of the 30S subunit (bridge B1b), connecting the 2 subunits; this bridge is implicated in subunit movement. Contacts the P site tRNA; the 5S rRNA and some of its associated proteins might help stabilize positioning of ribosome-bound tRNAs.</text>
</comment>
<comment type="subunit">
    <text evidence="1">Part of the 50S ribosomal subunit; part of the 5S rRNA/L5/L18/L25 subcomplex. Contacts the 5S rRNA and the P site tRNA. Forms a bridge to the 30S subunit in the 70S ribosome.</text>
</comment>
<comment type="similarity">
    <text evidence="1">Belongs to the universal ribosomal protein uL5 family.</text>
</comment>